<organism>
    <name type="scientific">Campylobacter jejuni subsp. jejuni serotype O:2 (strain ATCC 700819 / NCTC 11168)</name>
    <dbReference type="NCBI Taxonomy" id="192222"/>
    <lineage>
        <taxon>Bacteria</taxon>
        <taxon>Pseudomonadati</taxon>
        <taxon>Campylobacterota</taxon>
        <taxon>Epsilonproteobacteria</taxon>
        <taxon>Campylobacterales</taxon>
        <taxon>Campylobacteraceae</taxon>
        <taxon>Campylobacter</taxon>
    </lineage>
</organism>
<accession>Q9PHT9</accession>
<accession>Q0PAU0</accession>
<gene>
    <name evidence="1" type="primary">queA</name>
    <name type="ordered locus">Cj0577c</name>
</gene>
<keyword id="KW-0963">Cytoplasm</keyword>
<keyword id="KW-0671">Queuosine biosynthesis</keyword>
<keyword id="KW-1185">Reference proteome</keyword>
<keyword id="KW-0949">S-adenosyl-L-methionine</keyword>
<keyword id="KW-0808">Transferase</keyword>
<sequence>MNKDLLLSSYDYTLANELIANYPTNPKEDARLLVFDRKNKEIFHTTFKNLQDFLPNCAIFFNDTKVIKARIYGNKASGGKIELFLHQPFLNSHNPLFLAQIKGRIKKDEILYFKEDLKVRVVELLNDGLRKVQFFQNDKTLDTSNLYNLLDKIGHIPLPPYIKREDEKSDLKDYQSIFAKNLGAVAAPTASLHFSETMLENLRKKHEIYHLTLHVGAGTFKSVECENIQEHKMHSEFFNIPQQACEIIDSKQAILGVGTTVTRTIEYYTRTKTKNGFCDLFLHPQNPPIRQNHLLTNFHLPKSTLIMLVSAFIGREQCLKLYELAIKEKYRFYSYGDAMLIL</sequence>
<name>QUEA_CAMJE</name>
<evidence type="ECO:0000255" key="1">
    <source>
        <dbReference type="HAMAP-Rule" id="MF_00113"/>
    </source>
</evidence>
<comment type="function">
    <text evidence="1">Transfers and isomerizes the ribose moiety from AdoMet to the 7-aminomethyl group of 7-deazaguanine (preQ1-tRNA) to give epoxyqueuosine (oQ-tRNA).</text>
</comment>
<comment type="catalytic activity">
    <reaction evidence="1">
        <text>7-aminomethyl-7-carbaguanosine(34) in tRNA + S-adenosyl-L-methionine = epoxyqueuosine(34) in tRNA + adenine + L-methionine + 2 H(+)</text>
        <dbReference type="Rhea" id="RHEA:32155"/>
        <dbReference type="Rhea" id="RHEA-COMP:10342"/>
        <dbReference type="Rhea" id="RHEA-COMP:18582"/>
        <dbReference type="ChEBI" id="CHEBI:15378"/>
        <dbReference type="ChEBI" id="CHEBI:16708"/>
        <dbReference type="ChEBI" id="CHEBI:57844"/>
        <dbReference type="ChEBI" id="CHEBI:59789"/>
        <dbReference type="ChEBI" id="CHEBI:82833"/>
        <dbReference type="ChEBI" id="CHEBI:194443"/>
        <dbReference type="EC" id="2.4.99.17"/>
    </reaction>
</comment>
<comment type="pathway">
    <text evidence="1">tRNA modification; tRNA-queuosine biosynthesis.</text>
</comment>
<comment type="subunit">
    <text evidence="1">Monomer.</text>
</comment>
<comment type="subcellular location">
    <subcellularLocation>
        <location evidence="1">Cytoplasm</location>
    </subcellularLocation>
</comment>
<comment type="similarity">
    <text evidence="1">Belongs to the QueA family.</text>
</comment>
<protein>
    <recommendedName>
        <fullName evidence="1">S-adenosylmethionine:tRNA ribosyltransferase-isomerase</fullName>
        <ecNumber evidence="1">2.4.99.17</ecNumber>
    </recommendedName>
    <alternativeName>
        <fullName evidence="1">Queuosine biosynthesis protein QueA</fullName>
    </alternativeName>
</protein>
<dbReference type="EC" id="2.4.99.17" evidence="1"/>
<dbReference type="EMBL" id="AL111168">
    <property type="protein sequence ID" value="CAL34723.1"/>
    <property type="molecule type" value="Genomic_DNA"/>
</dbReference>
<dbReference type="PIR" id="H81404">
    <property type="entry name" value="H81404"/>
</dbReference>
<dbReference type="RefSeq" id="WP_002852279.1">
    <property type="nucleotide sequence ID" value="NZ_SZUC01000002.1"/>
</dbReference>
<dbReference type="RefSeq" id="YP_002344007.1">
    <property type="nucleotide sequence ID" value="NC_002163.1"/>
</dbReference>
<dbReference type="SMR" id="Q9PHT9"/>
<dbReference type="IntAct" id="Q9PHT9">
    <property type="interactions" value="4"/>
</dbReference>
<dbReference type="STRING" id="192222.Cj0577c"/>
<dbReference type="PaxDb" id="192222-Cj0577c"/>
<dbReference type="EnsemblBacteria" id="CAL34723">
    <property type="protein sequence ID" value="CAL34723"/>
    <property type="gene ID" value="Cj0577c"/>
</dbReference>
<dbReference type="GeneID" id="904902"/>
<dbReference type="KEGG" id="cje:Cj0577c"/>
<dbReference type="PATRIC" id="fig|192222.6.peg.569"/>
<dbReference type="eggNOG" id="COG0809">
    <property type="taxonomic scope" value="Bacteria"/>
</dbReference>
<dbReference type="HOGENOM" id="CLU_039110_1_0_7"/>
<dbReference type="OrthoDB" id="9805933at2"/>
<dbReference type="UniPathway" id="UPA00392"/>
<dbReference type="Proteomes" id="UP000000799">
    <property type="component" value="Chromosome"/>
</dbReference>
<dbReference type="GO" id="GO:0005737">
    <property type="term" value="C:cytoplasm"/>
    <property type="evidence" value="ECO:0007669"/>
    <property type="project" value="UniProtKB-SubCell"/>
</dbReference>
<dbReference type="GO" id="GO:0051075">
    <property type="term" value="F:S-adenosylmethionine:tRNA ribosyltransferase-isomerase activity"/>
    <property type="evidence" value="ECO:0007669"/>
    <property type="project" value="UniProtKB-EC"/>
</dbReference>
<dbReference type="GO" id="GO:0008616">
    <property type="term" value="P:queuosine biosynthetic process"/>
    <property type="evidence" value="ECO:0007669"/>
    <property type="project" value="UniProtKB-UniRule"/>
</dbReference>
<dbReference type="GO" id="GO:0002099">
    <property type="term" value="P:tRNA wobble guanine modification"/>
    <property type="evidence" value="ECO:0007669"/>
    <property type="project" value="TreeGrafter"/>
</dbReference>
<dbReference type="Gene3D" id="2.40.10.240">
    <property type="entry name" value="QueA-like"/>
    <property type="match status" value="1"/>
</dbReference>
<dbReference type="Gene3D" id="3.40.1780.10">
    <property type="entry name" value="QueA-like"/>
    <property type="match status" value="1"/>
</dbReference>
<dbReference type="HAMAP" id="MF_00113">
    <property type="entry name" value="QueA"/>
    <property type="match status" value="1"/>
</dbReference>
<dbReference type="InterPro" id="IPR003699">
    <property type="entry name" value="QueA"/>
</dbReference>
<dbReference type="InterPro" id="IPR042118">
    <property type="entry name" value="QueA_dom1"/>
</dbReference>
<dbReference type="InterPro" id="IPR042119">
    <property type="entry name" value="QueA_dom2"/>
</dbReference>
<dbReference type="InterPro" id="IPR036100">
    <property type="entry name" value="QueA_sf"/>
</dbReference>
<dbReference type="NCBIfam" id="NF001140">
    <property type="entry name" value="PRK00147.1"/>
    <property type="match status" value="1"/>
</dbReference>
<dbReference type="NCBIfam" id="TIGR00113">
    <property type="entry name" value="queA"/>
    <property type="match status" value="1"/>
</dbReference>
<dbReference type="PANTHER" id="PTHR30307">
    <property type="entry name" value="S-ADENOSYLMETHIONINE:TRNA RIBOSYLTRANSFERASE-ISOMERASE"/>
    <property type="match status" value="1"/>
</dbReference>
<dbReference type="PANTHER" id="PTHR30307:SF0">
    <property type="entry name" value="S-ADENOSYLMETHIONINE:TRNA RIBOSYLTRANSFERASE-ISOMERASE"/>
    <property type="match status" value="1"/>
</dbReference>
<dbReference type="Pfam" id="PF02547">
    <property type="entry name" value="Queuosine_synth"/>
    <property type="match status" value="1"/>
</dbReference>
<dbReference type="SUPFAM" id="SSF111337">
    <property type="entry name" value="QueA-like"/>
    <property type="match status" value="1"/>
</dbReference>
<reference key="1">
    <citation type="journal article" date="2000" name="Nature">
        <title>The genome sequence of the food-borne pathogen Campylobacter jejuni reveals hypervariable sequences.</title>
        <authorList>
            <person name="Parkhill J."/>
            <person name="Wren B.W."/>
            <person name="Mungall K.L."/>
            <person name="Ketley J.M."/>
            <person name="Churcher C.M."/>
            <person name="Basham D."/>
            <person name="Chillingworth T."/>
            <person name="Davies R.M."/>
            <person name="Feltwell T."/>
            <person name="Holroyd S."/>
            <person name="Jagels K."/>
            <person name="Karlyshev A.V."/>
            <person name="Moule S."/>
            <person name="Pallen M.J."/>
            <person name="Penn C.W."/>
            <person name="Quail M.A."/>
            <person name="Rajandream M.A."/>
            <person name="Rutherford K.M."/>
            <person name="van Vliet A.H.M."/>
            <person name="Whitehead S."/>
            <person name="Barrell B.G."/>
        </authorList>
    </citation>
    <scope>NUCLEOTIDE SEQUENCE [LARGE SCALE GENOMIC DNA]</scope>
    <source>
        <strain>ATCC 700819 / NCTC 11168</strain>
    </source>
</reference>
<feature type="chain" id="PRO_0000165390" description="S-adenosylmethionine:tRNA ribosyltransferase-isomerase">
    <location>
        <begin position="1"/>
        <end position="342"/>
    </location>
</feature>
<proteinExistence type="inferred from homology"/>